<dbReference type="EC" id="2.7.9.3" evidence="2"/>
<dbReference type="EMBL" id="CP000148">
    <property type="protein sequence ID" value="ABB33125.1"/>
    <property type="molecule type" value="Genomic_DNA"/>
</dbReference>
<dbReference type="STRING" id="269799.Gmet_2907"/>
<dbReference type="KEGG" id="gme:Gmet_2907"/>
<dbReference type="eggNOG" id="COG0709">
    <property type="taxonomic scope" value="Bacteria"/>
</dbReference>
<dbReference type="HOGENOM" id="CLU_032859_0_1_7"/>
<dbReference type="Proteomes" id="UP000007073">
    <property type="component" value="Chromosome"/>
</dbReference>
<dbReference type="GO" id="GO:0005737">
    <property type="term" value="C:cytoplasm"/>
    <property type="evidence" value="ECO:0007669"/>
    <property type="project" value="TreeGrafter"/>
</dbReference>
<dbReference type="GO" id="GO:0005524">
    <property type="term" value="F:ATP binding"/>
    <property type="evidence" value="ECO:0007669"/>
    <property type="project" value="UniProtKB-UniRule"/>
</dbReference>
<dbReference type="GO" id="GO:0000287">
    <property type="term" value="F:magnesium ion binding"/>
    <property type="evidence" value="ECO:0007669"/>
    <property type="project" value="UniProtKB-UniRule"/>
</dbReference>
<dbReference type="GO" id="GO:0004756">
    <property type="term" value="F:selenide, water dikinase activity"/>
    <property type="evidence" value="ECO:0007669"/>
    <property type="project" value="UniProtKB-UniRule"/>
</dbReference>
<dbReference type="GO" id="GO:0016260">
    <property type="term" value="P:selenocysteine biosynthetic process"/>
    <property type="evidence" value="ECO:0007669"/>
    <property type="project" value="InterPro"/>
</dbReference>
<dbReference type="CDD" id="cd02195">
    <property type="entry name" value="SelD"/>
    <property type="match status" value="1"/>
</dbReference>
<dbReference type="FunFam" id="3.30.1330.10:FF:000003">
    <property type="entry name" value="Selenide, water dikinase"/>
    <property type="match status" value="1"/>
</dbReference>
<dbReference type="FunFam" id="3.90.650.10:FF:000004">
    <property type="entry name" value="Selenide, water dikinase"/>
    <property type="match status" value="1"/>
</dbReference>
<dbReference type="Gene3D" id="3.90.650.10">
    <property type="entry name" value="PurM-like C-terminal domain"/>
    <property type="match status" value="1"/>
</dbReference>
<dbReference type="Gene3D" id="3.30.1330.10">
    <property type="entry name" value="PurM-like, N-terminal domain"/>
    <property type="match status" value="1"/>
</dbReference>
<dbReference type="HAMAP" id="MF_00625">
    <property type="entry name" value="SelD"/>
    <property type="match status" value="1"/>
</dbReference>
<dbReference type="InterPro" id="IPR010918">
    <property type="entry name" value="PurM-like_C_dom"/>
</dbReference>
<dbReference type="InterPro" id="IPR036676">
    <property type="entry name" value="PurM-like_C_sf"/>
</dbReference>
<dbReference type="InterPro" id="IPR016188">
    <property type="entry name" value="PurM-like_N"/>
</dbReference>
<dbReference type="InterPro" id="IPR036921">
    <property type="entry name" value="PurM-like_N_sf"/>
</dbReference>
<dbReference type="InterPro" id="IPR023061">
    <property type="entry name" value="SelD_I"/>
</dbReference>
<dbReference type="InterPro" id="IPR004536">
    <property type="entry name" value="SPS/SelD"/>
</dbReference>
<dbReference type="NCBIfam" id="NF002098">
    <property type="entry name" value="PRK00943.1"/>
    <property type="match status" value="1"/>
</dbReference>
<dbReference type="NCBIfam" id="TIGR00476">
    <property type="entry name" value="selD"/>
    <property type="match status" value="1"/>
</dbReference>
<dbReference type="PANTHER" id="PTHR10256:SF0">
    <property type="entry name" value="INACTIVE SELENIDE, WATER DIKINASE-LIKE PROTEIN-RELATED"/>
    <property type="match status" value="1"/>
</dbReference>
<dbReference type="PANTHER" id="PTHR10256">
    <property type="entry name" value="SELENIDE, WATER DIKINASE"/>
    <property type="match status" value="1"/>
</dbReference>
<dbReference type="Pfam" id="PF00586">
    <property type="entry name" value="AIRS"/>
    <property type="match status" value="1"/>
</dbReference>
<dbReference type="Pfam" id="PF02769">
    <property type="entry name" value="AIRS_C"/>
    <property type="match status" value="1"/>
</dbReference>
<dbReference type="PIRSF" id="PIRSF036407">
    <property type="entry name" value="Selenphspht_syn"/>
    <property type="match status" value="1"/>
</dbReference>
<dbReference type="SUPFAM" id="SSF56042">
    <property type="entry name" value="PurM C-terminal domain-like"/>
    <property type="match status" value="1"/>
</dbReference>
<dbReference type="SUPFAM" id="SSF55326">
    <property type="entry name" value="PurM N-terminal domain-like"/>
    <property type="match status" value="1"/>
</dbReference>
<reference key="1">
    <citation type="journal article" date="2009" name="BMC Microbiol.">
        <title>The genome sequence of Geobacter metallireducens: features of metabolism, physiology and regulation common and dissimilar to Geobacter sulfurreducens.</title>
        <authorList>
            <person name="Aklujkar M."/>
            <person name="Krushkal J."/>
            <person name="DiBartolo G."/>
            <person name="Lapidus A."/>
            <person name="Land M.L."/>
            <person name="Lovley D.R."/>
        </authorList>
    </citation>
    <scope>NUCLEOTIDE SEQUENCE [LARGE SCALE GENOMIC DNA]</scope>
    <source>
        <strain>ATCC 53774 / DSM 7210 / GS-15</strain>
    </source>
</reference>
<evidence type="ECO:0000255" key="1"/>
<evidence type="ECO:0000255" key="2">
    <source>
        <dbReference type="HAMAP-Rule" id="MF_00625"/>
    </source>
</evidence>
<protein>
    <recommendedName>
        <fullName evidence="2">Selenide, water dikinase</fullName>
        <ecNumber evidence="2">2.7.9.3</ecNumber>
    </recommendedName>
    <alternativeName>
        <fullName evidence="2">Selenium donor protein</fullName>
    </alternativeName>
    <alternativeName>
        <fullName evidence="2">Selenophosphate synthase</fullName>
    </alternativeName>
</protein>
<feature type="chain" id="PRO_0000318648" description="Selenide, water dikinase">
    <location>
        <begin position="1"/>
        <end position="343"/>
    </location>
</feature>
<feature type="active site" evidence="2">
    <location>
        <position position="13"/>
    </location>
</feature>
<feature type="binding site" description="in other chain" evidence="2">
    <location>
        <position position="16"/>
    </location>
    <ligand>
        <name>ATP</name>
        <dbReference type="ChEBI" id="CHEBI:30616"/>
        <note>ligand shared between dimeric partners</note>
    </ligand>
</feature>
<feature type="binding site" description="in other chain" evidence="2">
    <location>
        <begin position="44"/>
        <end position="46"/>
    </location>
    <ligand>
        <name>ATP</name>
        <dbReference type="ChEBI" id="CHEBI:30616"/>
        <note>ligand shared between dimeric partners</note>
    </ligand>
</feature>
<feature type="binding site" evidence="2">
    <location>
        <position position="47"/>
    </location>
    <ligand>
        <name>Mg(2+)</name>
        <dbReference type="ChEBI" id="CHEBI:18420"/>
    </ligand>
</feature>
<feature type="binding site" description="in other chain" evidence="2">
    <location>
        <position position="64"/>
    </location>
    <ligand>
        <name>ATP</name>
        <dbReference type="ChEBI" id="CHEBI:30616"/>
        <note>ligand shared between dimeric partners</note>
    </ligand>
</feature>
<feature type="binding site" description="in other chain" evidence="2">
    <location>
        <position position="87"/>
    </location>
    <ligand>
        <name>ATP</name>
        <dbReference type="ChEBI" id="CHEBI:30616"/>
        <note>ligand shared between dimeric partners</note>
    </ligand>
</feature>
<feature type="binding site" evidence="2">
    <location>
        <position position="87"/>
    </location>
    <ligand>
        <name>Mg(2+)</name>
        <dbReference type="ChEBI" id="CHEBI:18420"/>
    </ligand>
</feature>
<feature type="binding site" evidence="2">
    <location>
        <begin position="135"/>
        <end position="137"/>
    </location>
    <ligand>
        <name>ATP</name>
        <dbReference type="ChEBI" id="CHEBI:30616"/>
        <note>ligand shared between dimeric partners</note>
    </ligand>
</feature>
<feature type="binding site" evidence="2">
    <location>
        <position position="223"/>
    </location>
    <ligand>
        <name>Mg(2+)</name>
        <dbReference type="ChEBI" id="CHEBI:18420"/>
    </ligand>
</feature>
<feature type="site" description="Important for catalytic activity" evidence="2">
    <location>
        <position position="16"/>
    </location>
</feature>
<feature type="non-standard amino acid" description="Selenocysteine" evidence="1">
    <location>
        <position position="13"/>
    </location>
</feature>
<organism>
    <name type="scientific">Geobacter metallireducens (strain ATCC 53774 / DSM 7210 / GS-15)</name>
    <dbReference type="NCBI Taxonomy" id="269799"/>
    <lineage>
        <taxon>Bacteria</taxon>
        <taxon>Pseudomonadati</taxon>
        <taxon>Thermodesulfobacteriota</taxon>
        <taxon>Desulfuromonadia</taxon>
        <taxon>Geobacterales</taxon>
        <taxon>Geobacteraceae</taxon>
        <taxon>Geobacter</taxon>
    </lineage>
</organism>
<name>SELD_GEOMG</name>
<keyword id="KW-0067">ATP-binding</keyword>
<keyword id="KW-0418">Kinase</keyword>
<keyword id="KW-0460">Magnesium</keyword>
<keyword id="KW-0479">Metal-binding</keyword>
<keyword id="KW-0547">Nucleotide-binding</keyword>
<keyword id="KW-1185">Reference proteome</keyword>
<keyword id="KW-0711">Selenium</keyword>
<keyword id="KW-0712">Selenocysteine</keyword>
<keyword id="KW-0808">Transferase</keyword>
<sequence length="343" mass="34985">MIKLTSLVKAAGUAAKLGPAGLEDALSGILGKGDDPNLLVGPETADDAGVYRIGEGLALVDTVDIITPLVDDPFTFGRIAAANALSDVYAMGGRPVTAMNLAFFPACTLPGQILADIMAGGLDAVREAGACLVGGHTVEDHELKYGLSVTGLISPGRIVRNSTARPGDRLILTKPLGTGIVSTAIKADMVAPGVVDEAIRWMALLNASAAGLMLECEASACTDVTGFGLLGHACEMARGAGVTLEIALDAVPLMGGVEDLVADGLVPAGCYRNRDHYTPLVSVSAGAGGRLIPLFDPQTSGGLLITLSPQFADSFLSMARDRGLFAVAVGGVLPPREHAVVIA</sequence>
<comment type="function">
    <text evidence="2">Synthesizes selenophosphate from selenide and ATP.</text>
</comment>
<comment type="catalytic activity">
    <reaction evidence="2">
        <text>hydrogenselenide + ATP + H2O = selenophosphate + AMP + phosphate + 2 H(+)</text>
        <dbReference type="Rhea" id="RHEA:18737"/>
        <dbReference type="ChEBI" id="CHEBI:15377"/>
        <dbReference type="ChEBI" id="CHEBI:15378"/>
        <dbReference type="ChEBI" id="CHEBI:16144"/>
        <dbReference type="ChEBI" id="CHEBI:29317"/>
        <dbReference type="ChEBI" id="CHEBI:30616"/>
        <dbReference type="ChEBI" id="CHEBI:43474"/>
        <dbReference type="ChEBI" id="CHEBI:456215"/>
        <dbReference type="EC" id="2.7.9.3"/>
    </reaction>
</comment>
<comment type="cofactor">
    <cofactor evidence="2">
        <name>Mg(2+)</name>
        <dbReference type="ChEBI" id="CHEBI:18420"/>
    </cofactor>
    <text evidence="2">Binds 1 Mg(2+) ion per monomer.</text>
</comment>
<comment type="subunit">
    <text evidence="2">Homodimer.</text>
</comment>
<comment type="similarity">
    <text evidence="2">Belongs to the selenophosphate synthase 1 family. Class I subfamily.</text>
</comment>
<accession>Q39RJ9</accession>
<proteinExistence type="inferred from homology"/>
<gene>
    <name evidence="2" type="primary">selD</name>
    <name type="ordered locus">Gmet_2907</name>
</gene>